<accession>Q59628</accession>
<evidence type="ECO:0000255" key="1">
    <source>
        <dbReference type="HAMAP-Rule" id="MF_00235"/>
    </source>
</evidence>
<feature type="chain" id="PRO_0000158816" description="Adenylate kinase">
    <location>
        <begin position="1" status="less than"/>
        <end position="174" status="greater than"/>
    </location>
</feature>
<feature type="region of interest" description="NMP" evidence="1">
    <location>
        <begin position="12"/>
        <end position="41"/>
    </location>
</feature>
<feature type="region of interest" description="LID" evidence="1">
    <location>
        <begin position="104"/>
        <end position="141"/>
    </location>
</feature>
<feature type="binding site" evidence="1">
    <location>
        <position position="13"/>
    </location>
    <ligand>
        <name>AMP</name>
        <dbReference type="ChEBI" id="CHEBI:456215"/>
    </ligand>
</feature>
<feature type="binding site" evidence="1">
    <location>
        <position position="18"/>
    </location>
    <ligand>
        <name>AMP</name>
        <dbReference type="ChEBI" id="CHEBI:456215"/>
    </ligand>
</feature>
<feature type="binding site" evidence="1">
    <location>
        <begin position="39"/>
        <end position="41"/>
    </location>
    <ligand>
        <name>AMP</name>
        <dbReference type="ChEBI" id="CHEBI:456215"/>
    </ligand>
</feature>
<feature type="binding site" evidence="1">
    <location>
        <begin position="67"/>
        <end position="70"/>
    </location>
    <ligand>
        <name>AMP</name>
        <dbReference type="ChEBI" id="CHEBI:456215"/>
    </ligand>
</feature>
<feature type="binding site" evidence="1">
    <location>
        <position position="74"/>
    </location>
    <ligand>
        <name>AMP</name>
        <dbReference type="ChEBI" id="CHEBI:456215"/>
    </ligand>
</feature>
<feature type="binding site" evidence="1">
    <location>
        <position position="105"/>
    </location>
    <ligand>
        <name>ATP</name>
        <dbReference type="ChEBI" id="CHEBI:30616"/>
    </ligand>
</feature>
<feature type="binding site" evidence="1">
    <location>
        <begin position="114"/>
        <end position="115"/>
    </location>
    <ligand>
        <name>ATP</name>
        <dbReference type="ChEBI" id="CHEBI:30616"/>
    </ligand>
</feature>
<feature type="binding site" evidence="1">
    <location>
        <position position="138"/>
    </location>
    <ligand>
        <name>AMP</name>
        <dbReference type="ChEBI" id="CHEBI:456215"/>
    </ligand>
</feature>
<feature type="binding site" evidence="1">
    <location>
        <position position="149"/>
    </location>
    <ligand>
        <name>AMP</name>
        <dbReference type="ChEBI" id="CHEBI:456215"/>
    </ligand>
</feature>
<feature type="non-terminal residue">
    <location>
        <position position="1"/>
    </location>
</feature>
<feature type="non-terminal residue">
    <location>
        <position position="174"/>
    </location>
</feature>
<sequence>FITAAFGIPQISTGDMLRAAIKAGTPLGLEAKKIIDEGGLVRDDIIIGMVKERIAQDDCKNGFLFDGFPRTLAQAEAMVEAGVDLDAVVEIDVPDSVIVDRMSGRRVHLASGRTYHVTYNPPKVEGKDDVTGEDLIQRDDDKEETVKKRLAVYHEQTEVLVDFYSKLEGEHAPK</sequence>
<reference key="1">
    <citation type="journal article" date="1996" name="J. Mol. Evol.">
        <title>A comparison of the nucleotide sequences of the adk and recA genes of pathogenic and commensal Neisseria species: evidence for extensive interspecies recombination within adk.</title>
        <authorList>
            <person name="Feil E."/>
            <person name="Zhou J."/>
            <person name="Maynard Smith J."/>
            <person name="Spratt B.G."/>
        </authorList>
    </citation>
    <scope>NUCLEOTIDE SEQUENCE [GENOMIC DNA]</scope>
    <source>
        <strain>NCTC 4590 / Flava</strain>
    </source>
</reference>
<comment type="function">
    <text evidence="1">Catalyzes the reversible transfer of the terminal phosphate group between ATP and AMP. Plays an important role in cellular energy homeostasis and in adenine nucleotide metabolism.</text>
</comment>
<comment type="catalytic activity">
    <reaction evidence="1">
        <text>AMP + ATP = 2 ADP</text>
        <dbReference type="Rhea" id="RHEA:12973"/>
        <dbReference type="ChEBI" id="CHEBI:30616"/>
        <dbReference type="ChEBI" id="CHEBI:456215"/>
        <dbReference type="ChEBI" id="CHEBI:456216"/>
        <dbReference type="EC" id="2.7.4.3"/>
    </reaction>
</comment>
<comment type="pathway">
    <text evidence="1">Purine metabolism; AMP biosynthesis via salvage pathway; AMP from ADP: step 1/1.</text>
</comment>
<comment type="subunit">
    <text evidence="1">Monomer.</text>
</comment>
<comment type="subcellular location">
    <subcellularLocation>
        <location evidence="1">Cytoplasm</location>
    </subcellularLocation>
</comment>
<comment type="domain">
    <text evidence="1">Consists of three domains, a large central CORE domain and two small peripheral domains, NMPbind and LID, which undergo movements during catalysis. The LID domain closes over the site of phosphoryl transfer upon ATP binding. Assembling and dissambling the active center during each catalytic cycle provides an effective means to prevent ATP hydrolysis.</text>
</comment>
<comment type="similarity">
    <text evidence="1">Belongs to the adenylate kinase family.</text>
</comment>
<name>KAD_NEIPH</name>
<organism>
    <name type="scientific">Neisseria pharyngis</name>
    <dbReference type="NCBI Taxonomy" id="29434"/>
    <lineage>
        <taxon>Bacteria</taxon>
        <taxon>Pseudomonadati</taxon>
        <taxon>Pseudomonadota</taxon>
        <taxon>Betaproteobacteria</taxon>
        <taxon>Neisseriales</taxon>
        <taxon>Neisseriaceae</taxon>
        <taxon>Neisseria</taxon>
    </lineage>
</organism>
<keyword id="KW-0067">ATP-binding</keyword>
<keyword id="KW-0963">Cytoplasm</keyword>
<keyword id="KW-0418">Kinase</keyword>
<keyword id="KW-0545">Nucleotide biosynthesis</keyword>
<keyword id="KW-0547">Nucleotide-binding</keyword>
<keyword id="KW-0808">Transferase</keyword>
<dbReference type="EC" id="2.7.4.3" evidence="1"/>
<dbReference type="EMBL" id="U57712">
    <property type="protein sequence ID" value="AAB49189.1"/>
    <property type="molecule type" value="Genomic_DNA"/>
</dbReference>
<dbReference type="SMR" id="Q59628"/>
<dbReference type="UniPathway" id="UPA00588">
    <property type="reaction ID" value="UER00649"/>
</dbReference>
<dbReference type="GO" id="GO:0005737">
    <property type="term" value="C:cytoplasm"/>
    <property type="evidence" value="ECO:0007669"/>
    <property type="project" value="UniProtKB-SubCell"/>
</dbReference>
<dbReference type="GO" id="GO:0004017">
    <property type="term" value="F:adenylate kinase activity"/>
    <property type="evidence" value="ECO:0007669"/>
    <property type="project" value="UniProtKB-EC"/>
</dbReference>
<dbReference type="GO" id="GO:0005524">
    <property type="term" value="F:ATP binding"/>
    <property type="evidence" value="ECO:0007669"/>
    <property type="project" value="UniProtKB-KW"/>
</dbReference>
<dbReference type="GO" id="GO:0044209">
    <property type="term" value="P:AMP salvage"/>
    <property type="evidence" value="ECO:0007669"/>
    <property type="project" value="UniProtKB-UniPathway"/>
</dbReference>
<dbReference type="CDD" id="cd01428">
    <property type="entry name" value="ADK"/>
    <property type="match status" value="1"/>
</dbReference>
<dbReference type="FunFam" id="3.40.50.300:FF:000106">
    <property type="entry name" value="Adenylate kinase mitochondrial"/>
    <property type="match status" value="1"/>
</dbReference>
<dbReference type="Gene3D" id="3.40.50.300">
    <property type="entry name" value="P-loop containing nucleotide triphosphate hydrolases"/>
    <property type="match status" value="1"/>
</dbReference>
<dbReference type="HAMAP" id="MF_00235">
    <property type="entry name" value="Adenylate_kinase_Adk"/>
    <property type="match status" value="1"/>
</dbReference>
<dbReference type="InterPro" id="IPR006259">
    <property type="entry name" value="Adenyl_kin_sub"/>
</dbReference>
<dbReference type="InterPro" id="IPR000850">
    <property type="entry name" value="Adenylat/UMP-CMP_kin"/>
</dbReference>
<dbReference type="InterPro" id="IPR033690">
    <property type="entry name" value="Adenylat_kinase_CS"/>
</dbReference>
<dbReference type="InterPro" id="IPR007862">
    <property type="entry name" value="Adenylate_kinase_lid-dom"/>
</dbReference>
<dbReference type="InterPro" id="IPR027417">
    <property type="entry name" value="P-loop_NTPase"/>
</dbReference>
<dbReference type="NCBIfam" id="TIGR01351">
    <property type="entry name" value="adk"/>
    <property type="match status" value="1"/>
</dbReference>
<dbReference type="NCBIfam" id="NF001379">
    <property type="entry name" value="PRK00279.1-1"/>
    <property type="match status" value="1"/>
</dbReference>
<dbReference type="PANTHER" id="PTHR23359">
    <property type="entry name" value="NUCLEOTIDE KINASE"/>
    <property type="match status" value="1"/>
</dbReference>
<dbReference type="Pfam" id="PF00406">
    <property type="entry name" value="ADK"/>
    <property type="match status" value="1"/>
</dbReference>
<dbReference type="Pfam" id="PF05191">
    <property type="entry name" value="ADK_lid"/>
    <property type="match status" value="1"/>
</dbReference>
<dbReference type="PRINTS" id="PR00094">
    <property type="entry name" value="ADENYLTKNASE"/>
</dbReference>
<dbReference type="SUPFAM" id="SSF52540">
    <property type="entry name" value="P-loop containing nucleoside triphosphate hydrolases"/>
    <property type="match status" value="1"/>
</dbReference>
<dbReference type="PROSITE" id="PS00113">
    <property type="entry name" value="ADENYLATE_KINASE"/>
    <property type="match status" value="1"/>
</dbReference>
<gene>
    <name evidence="1" type="primary">adk</name>
</gene>
<proteinExistence type="inferred from homology"/>
<protein>
    <recommendedName>
        <fullName evidence="1">Adenylate kinase</fullName>
        <shortName evidence="1">AK</shortName>
        <ecNumber evidence="1">2.7.4.3</ecNumber>
    </recommendedName>
    <alternativeName>
        <fullName evidence="1">ATP-AMP transphosphorylase</fullName>
    </alternativeName>
    <alternativeName>
        <fullName evidence="1">ATP:AMP phosphotransferase</fullName>
    </alternativeName>
    <alternativeName>
        <fullName evidence="1">Adenylate monophosphate kinase</fullName>
    </alternativeName>
</protein>